<proteinExistence type="evidence at protein level"/>
<name>ZN133_HUMAN</name>
<organism>
    <name type="scientific">Homo sapiens</name>
    <name type="common">Human</name>
    <dbReference type="NCBI Taxonomy" id="9606"/>
    <lineage>
        <taxon>Eukaryota</taxon>
        <taxon>Metazoa</taxon>
        <taxon>Chordata</taxon>
        <taxon>Craniata</taxon>
        <taxon>Vertebrata</taxon>
        <taxon>Euteleostomi</taxon>
        <taxon>Mammalia</taxon>
        <taxon>Eutheria</taxon>
        <taxon>Euarchontoglires</taxon>
        <taxon>Primates</taxon>
        <taxon>Haplorrhini</taxon>
        <taxon>Catarrhini</taxon>
        <taxon>Hominidae</taxon>
        <taxon>Homo</taxon>
    </lineage>
</organism>
<accession>P52736</accession>
<accession>A8K5S4</accession>
<accession>B4DHU7</accession>
<accession>B4DIB8</accession>
<accession>B7ZAS1</accession>
<accession>F5H289</accession>
<accession>J3KQ11</accession>
<accession>J3KQJ0</accession>
<accession>Q53XU1</accession>
<accession>Q5JXV8</accession>
<accession>Q9BUV2</accession>
<accession>Q9H443</accession>
<reference key="1">
    <citation type="journal article" date="1995" name="FEBS Lett.">
        <title>Repression of transcriptional activity by heterologous KRAB domains present in zinc finger proteins.</title>
        <authorList>
            <person name="Vissing H."/>
            <person name="Meyer W.-K."/>
            <person name="Aagaard L."/>
            <person name="Tommerup N."/>
            <person name="Thiesen H.-J."/>
        </authorList>
    </citation>
    <scope>NUCLEOTIDE SEQUENCE [MRNA] (ISOFORM 1)</scope>
    <scope>VARIANT THR-193</scope>
    <source>
        <tissue>Insulinoma</tissue>
    </source>
</reference>
<reference key="2">
    <citation type="journal article" date="1995" name="Genomics">
        <title>Isolation and fine mapping of 16 novel human zinc finger-encoding cDNAs identify putative candidate genes for developmental and malignant disorders.</title>
        <authorList>
            <person name="Tommerup N."/>
            <person name="Vissing H."/>
        </authorList>
    </citation>
    <scope>NUCLEOTIDE SEQUENCE [MRNA] (ISOFORM 1)</scope>
    <scope>VARIANT THR-193</scope>
    <source>
        <tissue>Insulinoma</tissue>
    </source>
</reference>
<reference key="3">
    <citation type="submission" date="2003-05" db="EMBL/GenBank/DDBJ databases">
        <title>Cloning of human full-length CDSs in BD Creator(TM) system donor vector.</title>
        <authorList>
            <person name="Kalnine N."/>
            <person name="Chen X."/>
            <person name="Rolfs A."/>
            <person name="Halleck A."/>
            <person name="Hines L."/>
            <person name="Eisenstein S."/>
            <person name="Koundinya M."/>
            <person name="Raphael J."/>
            <person name="Moreira D."/>
            <person name="Kelley T."/>
            <person name="LaBaer J."/>
            <person name="Lin Y."/>
            <person name="Phelan M."/>
            <person name="Farmer A."/>
        </authorList>
    </citation>
    <scope>NUCLEOTIDE SEQUENCE [LARGE SCALE MRNA] (ISOFORM 2)</scope>
    <scope>VARIANT THR-193</scope>
</reference>
<reference key="4">
    <citation type="journal article" date="2004" name="Nat. Genet.">
        <title>Complete sequencing and characterization of 21,243 full-length human cDNAs.</title>
        <authorList>
            <person name="Ota T."/>
            <person name="Suzuki Y."/>
            <person name="Nishikawa T."/>
            <person name="Otsuki T."/>
            <person name="Sugiyama T."/>
            <person name="Irie R."/>
            <person name="Wakamatsu A."/>
            <person name="Hayashi K."/>
            <person name="Sato H."/>
            <person name="Nagai K."/>
            <person name="Kimura K."/>
            <person name="Makita H."/>
            <person name="Sekine M."/>
            <person name="Obayashi M."/>
            <person name="Nishi T."/>
            <person name="Shibahara T."/>
            <person name="Tanaka T."/>
            <person name="Ishii S."/>
            <person name="Yamamoto J."/>
            <person name="Saito K."/>
            <person name="Kawai Y."/>
            <person name="Isono Y."/>
            <person name="Nakamura Y."/>
            <person name="Nagahari K."/>
            <person name="Murakami K."/>
            <person name="Yasuda T."/>
            <person name="Iwayanagi T."/>
            <person name="Wagatsuma M."/>
            <person name="Shiratori A."/>
            <person name="Sudo H."/>
            <person name="Hosoiri T."/>
            <person name="Kaku Y."/>
            <person name="Kodaira H."/>
            <person name="Kondo H."/>
            <person name="Sugawara M."/>
            <person name="Takahashi M."/>
            <person name="Kanda K."/>
            <person name="Yokoi T."/>
            <person name="Furuya T."/>
            <person name="Kikkawa E."/>
            <person name="Omura Y."/>
            <person name="Abe K."/>
            <person name="Kamihara K."/>
            <person name="Katsuta N."/>
            <person name="Sato K."/>
            <person name="Tanikawa M."/>
            <person name="Yamazaki M."/>
            <person name="Ninomiya K."/>
            <person name="Ishibashi T."/>
            <person name="Yamashita H."/>
            <person name="Murakawa K."/>
            <person name="Fujimori K."/>
            <person name="Tanai H."/>
            <person name="Kimata M."/>
            <person name="Watanabe M."/>
            <person name="Hiraoka S."/>
            <person name="Chiba Y."/>
            <person name="Ishida S."/>
            <person name="Ono Y."/>
            <person name="Takiguchi S."/>
            <person name="Watanabe S."/>
            <person name="Yosida M."/>
            <person name="Hotuta T."/>
            <person name="Kusano J."/>
            <person name="Kanehori K."/>
            <person name="Takahashi-Fujii A."/>
            <person name="Hara H."/>
            <person name="Tanase T.-O."/>
            <person name="Nomura Y."/>
            <person name="Togiya S."/>
            <person name="Komai F."/>
            <person name="Hara R."/>
            <person name="Takeuchi K."/>
            <person name="Arita M."/>
            <person name="Imose N."/>
            <person name="Musashino K."/>
            <person name="Yuuki H."/>
            <person name="Oshima A."/>
            <person name="Sasaki N."/>
            <person name="Aotsuka S."/>
            <person name="Yoshikawa Y."/>
            <person name="Matsunawa H."/>
            <person name="Ichihara T."/>
            <person name="Shiohata N."/>
            <person name="Sano S."/>
            <person name="Moriya S."/>
            <person name="Momiyama H."/>
            <person name="Satoh N."/>
            <person name="Takami S."/>
            <person name="Terashima Y."/>
            <person name="Suzuki O."/>
            <person name="Nakagawa S."/>
            <person name="Senoh A."/>
            <person name="Mizoguchi H."/>
            <person name="Goto Y."/>
            <person name="Shimizu F."/>
            <person name="Wakebe H."/>
            <person name="Hishigaki H."/>
            <person name="Watanabe T."/>
            <person name="Sugiyama A."/>
            <person name="Takemoto M."/>
            <person name="Kawakami B."/>
            <person name="Yamazaki M."/>
            <person name="Watanabe K."/>
            <person name="Kumagai A."/>
            <person name="Itakura S."/>
            <person name="Fukuzumi Y."/>
            <person name="Fujimori Y."/>
            <person name="Komiyama M."/>
            <person name="Tashiro H."/>
            <person name="Tanigami A."/>
            <person name="Fujiwara T."/>
            <person name="Ono T."/>
            <person name="Yamada K."/>
            <person name="Fujii Y."/>
            <person name="Ozaki K."/>
            <person name="Hirao M."/>
            <person name="Ohmori Y."/>
            <person name="Kawabata A."/>
            <person name="Hikiji T."/>
            <person name="Kobatake N."/>
            <person name="Inagaki H."/>
            <person name="Ikema Y."/>
            <person name="Okamoto S."/>
            <person name="Okitani R."/>
            <person name="Kawakami T."/>
            <person name="Noguchi S."/>
            <person name="Itoh T."/>
            <person name="Shigeta K."/>
            <person name="Senba T."/>
            <person name="Matsumura K."/>
            <person name="Nakajima Y."/>
            <person name="Mizuno T."/>
            <person name="Morinaga M."/>
            <person name="Sasaki M."/>
            <person name="Togashi T."/>
            <person name="Oyama M."/>
            <person name="Hata H."/>
            <person name="Watanabe M."/>
            <person name="Komatsu T."/>
            <person name="Mizushima-Sugano J."/>
            <person name="Satoh T."/>
            <person name="Shirai Y."/>
            <person name="Takahashi Y."/>
            <person name="Nakagawa K."/>
            <person name="Okumura K."/>
            <person name="Nagase T."/>
            <person name="Nomura N."/>
            <person name="Kikuchi H."/>
            <person name="Masuho Y."/>
            <person name="Yamashita R."/>
            <person name="Nakai K."/>
            <person name="Yada T."/>
            <person name="Nakamura Y."/>
            <person name="Ohara O."/>
            <person name="Isogai T."/>
            <person name="Sugano S."/>
        </authorList>
    </citation>
    <scope>NUCLEOTIDE SEQUENCE [LARGE SCALE MRNA] (ISOFORMS 1; 2; 3; 4 AND 5)</scope>
    <scope>VARIANT THR-193</scope>
    <source>
        <tissue>Brain</tissue>
        <tissue>Caudate nucleus</tissue>
        <tissue>Hippocampus</tissue>
        <tissue>Testis</tissue>
    </source>
</reference>
<reference key="5">
    <citation type="journal article" date="2001" name="Nature">
        <title>The DNA sequence and comparative analysis of human chromosome 20.</title>
        <authorList>
            <person name="Deloukas P."/>
            <person name="Matthews L.H."/>
            <person name="Ashurst J.L."/>
            <person name="Burton J."/>
            <person name="Gilbert J.G.R."/>
            <person name="Jones M."/>
            <person name="Stavrides G."/>
            <person name="Almeida J.P."/>
            <person name="Babbage A.K."/>
            <person name="Bagguley C.L."/>
            <person name="Bailey J."/>
            <person name="Barlow K.F."/>
            <person name="Bates K.N."/>
            <person name="Beard L.M."/>
            <person name="Beare D.M."/>
            <person name="Beasley O.P."/>
            <person name="Bird C.P."/>
            <person name="Blakey S.E."/>
            <person name="Bridgeman A.M."/>
            <person name="Brown A.J."/>
            <person name="Buck D."/>
            <person name="Burrill W.D."/>
            <person name="Butler A.P."/>
            <person name="Carder C."/>
            <person name="Carter N.P."/>
            <person name="Chapman J.C."/>
            <person name="Clamp M."/>
            <person name="Clark G."/>
            <person name="Clark L.N."/>
            <person name="Clark S.Y."/>
            <person name="Clee C.M."/>
            <person name="Clegg S."/>
            <person name="Cobley V.E."/>
            <person name="Collier R.E."/>
            <person name="Connor R.E."/>
            <person name="Corby N.R."/>
            <person name="Coulson A."/>
            <person name="Coville G.J."/>
            <person name="Deadman R."/>
            <person name="Dhami P.D."/>
            <person name="Dunn M."/>
            <person name="Ellington A.G."/>
            <person name="Frankland J.A."/>
            <person name="Fraser A."/>
            <person name="French L."/>
            <person name="Garner P."/>
            <person name="Grafham D.V."/>
            <person name="Griffiths C."/>
            <person name="Griffiths M.N.D."/>
            <person name="Gwilliam R."/>
            <person name="Hall R.E."/>
            <person name="Hammond S."/>
            <person name="Harley J.L."/>
            <person name="Heath P.D."/>
            <person name="Ho S."/>
            <person name="Holden J.L."/>
            <person name="Howden P.J."/>
            <person name="Huckle E."/>
            <person name="Hunt A.R."/>
            <person name="Hunt S.E."/>
            <person name="Jekosch K."/>
            <person name="Johnson C.M."/>
            <person name="Johnson D."/>
            <person name="Kay M.P."/>
            <person name="Kimberley A.M."/>
            <person name="King A."/>
            <person name="Knights A."/>
            <person name="Laird G.K."/>
            <person name="Lawlor S."/>
            <person name="Lehvaeslaiho M.H."/>
            <person name="Leversha M.A."/>
            <person name="Lloyd C."/>
            <person name="Lloyd D.M."/>
            <person name="Lovell J.D."/>
            <person name="Marsh V.L."/>
            <person name="Martin S.L."/>
            <person name="McConnachie L.J."/>
            <person name="McLay K."/>
            <person name="McMurray A.A."/>
            <person name="Milne S.A."/>
            <person name="Mistry D."/>
            <person name="Moore M.J.F."/>
            <person name="Mullikin J.C."/>
            <person name="Nickerson T."/>
            <person name="Oliver K."/>
            <person name="Parker A."/>
            <person name="Patel R."/>
            <person name="Pearce T.A.V."/>
            <person name="Peck A.I."/>
            <person name="Phillimore B.J.C.T."/>
            <person name="Prathalingam S.R."/>
            <person name="Plumb R.W."/>
            <person name="Ramsay H."/>
            <person name="Rice C.M."/>
            <person name="Ross M.T."/>
            <person name="Scott C.E."/>
            <person name="Sehra H.K."/>
            <person name="Shownkeen R."/>
            <person name="Sims S."/>
            <person name="Skuce C.D."/>
            <person name="Smith M.L."/>
            <person name="Soderlund C."/>
            <person name="Steward C.A."/>
            <person name="Sulston J.E."/>
            <person name="Swann R.M."/>
            <person name="Sycamore N."/>
            <person name="Taylor R."/>
            <person name="Tee L."/>
            <person name="Thomas D.W."/>
            <person name="Thorpe A."/>
            <person name="Tracey A."/>
            <person name="Tromans A.C."/>
            <person name="Vaudin M."/>
            <person name="Wall M."/>
            <person name="Wallis J.M."/>
            <person name="Whitehead S.L."/>
            <person name="Whittaker P."/>
            <person name="Willey D.L."/>
            <person name="Williams L."/>
            <person name="Williams S.A."/>
            <person name="Wilming L."/>
            <person name="Wray P.W."/>
            <person name="Hubbard T."/>
            <person name="Durbin R.M."/>
            <person name="Bentley D.R."/>
            <person name="Beck S."/>
            <person name="Rogers J."/>
        </authorList>
    </citation>
    <scope>NUCLEOTIDE SEQUENCE [LARGE SCALE GENOMIC DNA]</scope>
</reference>
<reference key="6">
    <citation type="submission" date="2005-09" db="EMBL/GenBank/DDBJ databases">
        <authorList>
            <person name="Mural R.J."/>
            <person name="Istrail S."/>
            <person name="Sutton G.G."/>
            <person name="Florea L."/>
            <person name="Halpern A.L."/>
            <person name="Mobarry C.M."/>
            <person name="Lippert R."/>
            <person name="Walenz B."/>
            <person name="Shatkay H."/>
            <person name="Dew I."/>
            <person name="Miller J.R."/>
            <person name="Flanigan M.J."/>
            <person name="Edwards N.J."/>
            <person name="Bolanos R."/>
            <person name="Fasulo D."/>
            <person name="Halldorsson B.V."/>
            <person name="Hannenhalli S."/>
            <person name="Turner R."/>
            <person name="Yooseph S."/>
            <person name="Lu F."/>
            <person name="Nusskern D.R."/>
            <person name="Shue B.C."/>
            <person name="Zheng X.H."/>
            <person name="Zhong F."/>
            <person name="Delcher A.L."/>
            <person name="Huson D.H."/>
            <person name="Kravitz S.A."/>
            <person name="Mouchard L."/>
            <person name="Reinert K."/>
            <person name="Remington K.A."/>
            <person name="Clark A.G."/>
            <person name="Waterman M.S."/>
            <person name="Eichler E.E."/>
            <person name="Adams M.D."/>
            <person name="Hunkapiller M.W."/>
            <person name="Myers E.W."/>
            <person name="Venter J.C."/>
        </authorList>
    </citation>
    <scope>NUCLEOTIDE SEQUENCE [LARGE SCALE GENOMIC DNA]</scope>
    <scope>VARIANT THR-193</scope>
</reference>
<reference key="7">
    <citation type="journal article" date="2004" name="Genome Res.">
        <title>The status, quality, and expansion of the NIH full-length cDNA project: the Mammalian Gene Collection (MGC).</title>
        <authorList>
            <consortium name="The MGC Project Team"/>
        </authorList>
    </citation>
    <scope>NUCLEOTIDE SEQUENCE [LARGE SCALE MRNA] (ISOFORM 2)</scope>
    <scope>VARIANT THR-193</scope>
    <source>
        <tissue>Lung</tissue>
    </source>
</reference>
<reference key="8">
    <citation type="journal article" date="2017" name="Nat. Struct. Mol. Biol.">
        <title>Site-specific mapping of the human SUMO proteome reveals co-modification with phosphorylation.</title>
        <authorList>
            <person name="Hendriks I.A."/>
            <person name="Lyon D."/>
            <person name="Young C."/>
            <person name="Jensen L.J."/>
            <person name="Vertegaal A.C."/>
            <person name="Nielsen M.L."/>
        </authorList>
    </citation>
    <scope>SUMOYLATION [LARGE SCALE ANALYSIS] AT LYS-310; LYS-338; LYS-506; LYS-576; LYS-604 AND LYS-618</scope>
    <scope>IDENTIFICATION BY MASS SPECTROMETRY [LARGE SCALE ANALYSIS]</scope>
</reference>
<gene>
    <name type="primary">ZNF133</name>
    <name type="synonym">ZNF150</name>
</gene>
<dbReference type="EMBL" id="U09366">
    <property type="protein sequence ID" value="AAC50260.1"/>
    <property type="molecule type" value="mRNA"/>
</dbReference>
<dbReference type="EMBL" id="BT007310">
    <property type="protein sequence ID" value="AAP35974.1"/>
    <property type="molecule type" value="mRNA"/>
</dbReference>
<dbReference type="EMBL" id="AK291389">
    <property type="protein sequence ID" value="BAF84078.1"/>
    <property type="molecule type" value="mRNA"/>
</dbReference>
<dbReference type="EMBL" id="AK295273">
    <property type="protein sequence ID" value="BAG58259.1"/>
    <property type="molecule type" value="mRNA"/>
</dbReference>
<dbReference type="EMBL" id="AK295513">
    <property type="protein sequence ID" value="BAG58430.1"/>
    <property type="molecule type" value="mRNA"/>
</dbReference>
<dbReference type="EMBL" id="AK316386">
    <property type="protein sequence ID" value="BAH14757.1"/>
    <property type="molecule type" value="mRNA"/>
</dbReference>
<dbReference type="EMBL" id="AL049646">
    <property type="status" value="NOT_ANNOTATED_CDS"/>
    <property type="molecule type" value="Genomic_DNA"/>
</dbReference>
<dbReference type="EMBL" id="CH471133">
    <property type="protein sequence ID" value="EAX10250.1"/>
    <property type="molecule type" value="Genomic_DNA"/>
</dbReference>
<dbReference type="EMBL" id="CH471133">
    <property type="protein sequence ID" value="EAX10251.1"/>
    <property type="molecule type" value="Genomic_DNA"/>
</dbReference>
<dbReference type="EMBL" id="CH471133">
    <property type="protein sequence ID" value="EAX10252.1"/>
    <property type="molecule type" value="Genomic_DNA"/>
</dbReference>
<dbReference type="EMBL" id="CH471133">
    <property type="protein sequence ID" value="EAX10253.1"/>
    <property type="molecule type" value="Genomic_DNA"/>
</dbReference>
<dbReference type="EMBL" id="BC001887">
    <property type="protein sequence ID" value="AAH01887.1"/>
    <property type="molecule type" value="mRNA"/>
</dbReference>
<dbReference type="CCDS" id="CCDS13134.1">
    <molecule id="P52736-2"/>
</dbReference>
<dbReference type="CCDS" id="CCDS63233.1">
    <molecule id="P52736-5"/>
</dbReference>
<dbReference type="CCDS" id="CCDS63234.1">
    <molecule id="P52736-1"/>
</dbReference>
<dbReference type="CCDS" id="CCDS74703.2">
    <molecule id="P52736-3"/>
</dbReference>
<dbReference type="PIR" id="A57785">
    <property type="entry name" value="A57785"/>
</dbReference>
<dbReference type="RefSeq" id="NP_001076799.2">
    <molecule id="P52736-2"/>
    <property type="nucleotide sequence ID" value="NM_001083330.4"/>
</dbReference>
<dbReference type="RefSeq" id="NP_001269924.2">
    <molecule id="P52736-2"/>
    <property type="nucleotide sequence ID" value="NM_001282995.3"/>
</dbReference>
<dbReference type="RefSeq" id="NP_001269926.2">
    <molecule id="P52736-1"/>
    <property type="nucleotide sequence ID" value="NM_001282997.3"/>
</dbReference>
<dbReference type="RefSeq" id="NP_001269927.2">
    <molecule id="P52736-1"/>
    <property type="nucleotide sequence ID" value="NM_001282998.3"/>
</dbReference>
<dbReference type="RefSeq" id="NP_001269928.2">
    <molecule id="P52736-1"/>
    <property type="nucleotide sequence ID" value="NM_001282999.3"/>
</dbReference>
<dbReference type="RefSeq" id="NP_001269929.2">
    <molecule id="P52736-1"/>
    <property type="nucleotide sequence ID" value="NM_001283000.3"/>
</dbReference>
<dbReference type="RefSeq" id="NP_001269930.2">
    <molecule id="P52736-1"/>
    <property type="nucleotide sequence ID" value="NM_001283001.3"/>
</dbReference>
<dbReference type="RefSeq" id="NP_001269931.2">
    <molecule id="P52736-5"/>
    <property type="nucleotide sequence ID" value="NM_001283002.3"/>
</dbReference>
<dbReference type="RefSeq" id="NP_001269932.2">
    <molecule id="P52736-4"/>
    <property type="nucleotide sequence ID" value="NM_001283003.3"/>
</dbReference>
<dbReference type="RefSeq" id="NP_001269933.2">
    <molecule id="P52736-4"/>
    <property type="nucleotide sequence ID" value="NM_001283004.3"/>
</dbReference>
<dbReference type="RefSeq" id="NP_001269934.2">
    <molecule id="P52736-3"/>
    <property type="nucleotide sequence ID" value="NM_001283005.3"/>
</dbReference>
<dbReference type="RefSeq" id="NP_001269935.2">
    <molecule id="P52736-3"/>
    <property type="nucleotide sequence ID" value="NM_001283006.3"/>
</dbReference>
<dbReference type="RefSeq" id="NP_001269936.2">
    <molecule id="P52736-3"/>
    <property type="nucleotide sequence ID" value="NM_001283007.3"/>
</dbReference>
<dbReference type="RefSeq" id="NP_001269937.2">
    <molecule id="P52736-3"/>
    <property type="nucleotide sequence ID" value="NM_001283008.3"/>
</dbReference>
<dbReference type="RefSeq" id="NP_001339379.2">
    <molecule id="P52736-4"/>
    <property type="nucleotide sequence ID" value="NM_001352450.2"/>
</dbReference>
<dbReference type="RefSeq" id="NP_001339380.2">
    <molecule id="P52736-2"/>
    <property type="nucleotide sequence ID" value="NM_001352451.2"/>
</dbReference>
<dbReference type="RefSeq" id="NP_001339381.2">
    <molecule id="P52736-1"/>
    <property type="nucleotide sequence ID" value="NM_001352452.2"/>
</dbReference>
<dbReference type="RefSeq" id="NP_001339382.2">
    <molecule id="P52736-3"/>
    <property type="nucleotide sequence ID" value="NM_001352453.2"/>
</dbReference>
<dbReference type="RefSeq" id="NP_001339383.2">
    <molecule id="P52736-1"/>
    <property type="nucleotide sequence ID" value="NM_001352454.2"/>
</dbReference>
<dbReference type="RefSeq" id="NP_001339384.2">
    <molecule id="P52736-1"/>
    <property type="nucleotide sequence ID" value="NM_001352455.2"/>
</dbReference>
<dbReference type="RefSeq" id="NP_001339385.2">
    <molecule id="P52736-2"/>
    <property type="nucleotide sequence ID" value="NM_001352456.2"/>
</dbReference>
<dbReference type="RefSeq" id="NP_001339386.2">
    <molecule id="P52736-2"/>
    <property type="nucleotide sequence ID" value="NM_001352457.2"/>
</dbReference>
<dbReference type="RefSeq" id="NP_001339387.2">
    <molecule id="P52736-2"/>
    <property type="nucleotide sequence ID" value="NM_001352458.2"/>
</dbReference>
<dbReference type="RefSeq" id="NP_001339388.2">
    <molecule id="P52736-2"/>
    <property type="nucleotide sequence ID" value="NM_001352459.2"/>
</dbReference>
<dbReference type="RefSeq" id="NP_001339389.2">
    <molecule id="P52736-4"/>
    <property type="nucleotide sequence ID" value="NM_001352460.2"/>
</dbReference>
<dbReference type="RefSeq" id="NP_001339390.2">
    <molecule id="P52736-4"/>
    <property type="nucleotide sequence ID" value="NM_001352461.2"/>
</dbReference>
<dbReference type="RefSeq" id="NP_001339392.2">
    <molecule id="P52736-1"/>
    <property type="nucleotide sequence ID" value="NM_001352463.2"/>
</dbReference>
<dbReference type="RefSeq" id="NP_001339393.2">
    <molecule id="P52736-1"/>
    <property type="nucleotide sequence ID" value="NM_001352464.2"/>
</dbReference>
<dbReference type="RefSeq" id="NP_001374227.1">
    <molecule id="P52736-1"/>
    <property type="nucleotide sequence ID" value="NM_001387298.1"/>
</dbReference>
<dbReference type="RefSeq" id="NP_001374228.1">
    <molecule id="P52736-1"/>
    <property type="nucleotide sequence ID" value="NM_001387299.1"/>
</dbReference>
<dbReference type="RefSeq" id="NP_001374229.1">
    <molecule id="P52736-1"/>
    <property type="nucleotide sequence ID" value="NM_001387300.1"/>
</dbReference>
<dbReference type="RefSeq" id="NP_001374230.1">
    <molecule id="P52736-1"/>
    <property type="nucleotide sequence ID" value="NM_001387301.1"/>
</dbReference>
<dbReference type="RefSeq" id="NP_001374231.1">
    <molecule id="P52736-1"/>
    <property type="nucleotide sequence ID" value="NM_001387302.1"/>
</dbReference>
<dbReference type="RefSeq" id="NP_001374232.1">
    <molecule id="P52736-1"/>
    <property type="nucleotide sequence ID" value="NM_001387303.1"/>
</dbReference>
<dbReference type="RefSeq" id="NP_001374233.1">
    <molecule id="P52736-1"/>
    <property type="nucleotide sequence ID" value="NM_001387304.1"/>
</dbReference>
<dbReference type="RefSeq" id="NP_001374234.1">
    <molecule id="P52736-1"/>
    <property type="nucleotide sequence ID" value="NM_001387305.1"/>
</dbReference>
<dbReference type="RefSeq" id="NP_001374235.1">
    <molecule id="P52736-2"/>
    <property type="nucleotide sequence ID" value="NM_001387306.1"/>
</dbReference>
<dbReference type="RefSeq" id="NP_001374236.1">
    <molecule id="P52736-2"/>
    <property type="nucleotide sequence ID" value="NM_001387307.1"/>
</dbReference>
<dbReference type="RefSeq" id="NP_001374237.1">
    <molecule id="P52736-2"/>
    <property type="nucleotide sequence ID" value="NM_001387308.1"/>
</dbReference>
<dbReference type="RefSeq" id="NP_001374238.1">
    <molecule id="P52736-2"/>
    <property type="nucleotide sequence ID" value="NM_001387309.1"/>
</dbReference>
<dbReference type="RefSeq" id="NP_001374239.1">
    <molecule id="P52736-2"/>
    <property type="nucleotide sequence ID" value="NM_001387310.1"/>
</dbReference>
<dbReference type="RefSeq" id="NP_001374240.1">
    <molecule id="P52736-2"/>
    <property type="nucleotide sequence ID" value="NM_001387311.1"/>
</dbReference>
<dbReference type="RefSeq" id="NP_001374244.1">
    <molecule id="P52736-4"/>
    <property type="nucleotide sequence ID" value="NM_001387315.1"/>
</dbReference>
<dbReference type="RefSeq" id="NP_001374245.1">
    <molecule id="P52736-4"/>
    <property type="nucleotide sequence ID" value="NM_001387316.1"/>
</dbReference>
<dbReference type="RefSeq" id="NP_001374246.1">
    <molecule id="P52736-4"/>
    <property type="nucleotide sequence ID" value="NM_001387317.1"/>
</dbReference>
<dbReference type="RefSeq" id="NP_001374247.1">
    <molecule id="P52736-4"/>
    <property type="nucleotide sequence ID" value="NM_001387318.1"/>
</dbReference>
<dbReference type="RefSeq" id="NP_001374249.1">
    <molecule id="P52736-3"/>
    <property type="nucleotide sequence ID" value="NM_001387320.1"/>
</dbReference>
<dbReference type="RefSeq" id="NP_001374250.1">
    <molecule id="P52736-3"/>
    <property type="nucleotide sequence ID" value="NM_001387321.1"/>
</dbReference>
<dbReference type="RefSeq" id="NP_003425.2">
    <molecule id="P52736-2"/>
    <property type="nucleotide sequence ID" value="NM_003434.5"/>
</dbReference>
<dbReference type="RefSeq" id="XP_005260876.1">
    <property type="nucleotide sequence ID" value="XM_005260819.1"/>
</dbReference>
<dbReference type="RefSeq" id="XP_005260877.1">
    <property type="nucleotide sequence ID" value="XM_005260820.4"/>
</dbReference>
<dbReference type="RefSeq" id="XP_011527638.1">
    <property type="nucleotide sequence ID" value="XM_011529336.1"/>
</dbReference>
<dbReference type="RefSeq" id="XP_011527639.1">
    <property type="nucleotide sequence ID" value="XM_011529337.1"/>
</dbReference>
<dbReference type="RefSeq" id="XP_011527640.1">
    <property type="nucleotide sequence ID" value="XM_011529338.2"/>
</dbReference>
<dbReference type="RefSeq" id="XP_011527641.1">
    <property type="nucleotide sequence ID" value="XM_011529339.1"/>
</dbReference>
<dbReference type="RefSeq" id="XP_016883530.1">
    <property type="nucleotide sequence ID" value="XM_017028041.1"/>
</dbReference>
<dbReference type="RefSeq" id="XP_016883531.1">
    <property type="nucleotide sequence ID" value="XM_017028042.1"/>
</dbReference>
<dbReference type="RefSeq" id="XP_016883533.1">
    <property type="nucleotide sequence ID" value="XM_017028044.1"/>
</dbReference>
<dbReference type="RefSeq" id="XP_016883534.1">
    <property type="nucleotide sequence ID" value="XM_017028045.1"/>
</dbReference>
<dbReference type="RefSeq" id="XP_016883535.1">
    <property type="nucleotide sequence ID" value="XM_017028046.1"/>
</dbReference>
<dbReference type="RefSeq" id="XP_016883536.1">
    <property type="nucleotide sequence ID" value="XM_017028047.1"/>
</dbReference>
<dbReference type="RefSeq" id="XP_016883537.1">
    <property type="nucleotide sequence ID" value="XM_017028048.1"/>
</dbReference>
<dbReference type="RefSeq" id="XP_016883538.1">
    <property type="nucleotide sequence ID" value="XM_017028049.1"/>
</dbReference>
<dbReference type="RefSeq" id="XP_016883539.1">
    <property type="nucleotide sequence ID" value="XM_017028050.1"/>
</dbReference>
<dbReference type="RefSeq" id="XP_016883540.1">
    <property type="nucleotide sequence ID" value="XM_017028051.1"/>
</dbReference>
<dbReference type="RefSeq" id="XP_016883541.1">
    <property type="nucleotide sequence ID" value="XM_017028052.1"/>
</dbReference>
<dbReference type="RefSeq" id="XP_016883542.1">
    <property type="nucleotide sequence ID" value="XM_017028053.1"/>
</dbReference>
<dbReference type="RefSeq" id="XP_016883543.1">
    <property type="nucleotide sequence ID" value="XM_017028054.1"/>
</dbReference>
<dbReference type="RefSeq" id="XP_016883544.1">
    <property type="nucleotide sequence ID" value="XM_017028055.1"/>
</dbReference>
<dbReference type="RefSeq" id="XP_016883545.1">
    <property type="nucleotide sequence ID" value="XM_017028056.1"/>
</dbReference>
<dbReference type="RefSeq" id="XP_016883546.1">
    <property type="nucleotide sequence ID" value="XM_017028057.1"/>
</dbReference>
<dbReference type="SMR" id="P52736"/>
<dbReference type="BioGRID" id="113487">
    <property type="interactions" value="29"/>
</dbReference>
<dbReference type="FunCoup" id="P52736">
    <property type="interactions" value="11"/>
</dbReference>
<dbReference type="IntAct" id="P52736">
    <property type="interactions" value="29"/>
</dbReference>
<dbReference type="MINT" id="P52736"/>
<dbReference type="STRING" id="9606.ENSP00000439427"/>
<dbReference type="iPTMnet" id="P52736"/>
<dbReference type="PhosphoSitePlus" id="P52736"/>
<dbReference type="BioMuta" id="ZNF133"/>
<dbReference type="DMDM" id="116242855"/>
<dbReference type="jPOST" id="P52736"/>
<dbReference type="MassIVE" id="P52736"/>
<dbReference type="PaxDb" id="9606-ENSP00000439427"/>
<dbReference type="PeptideAtlas" id="P52736"/>
<dbReference type="ProteomicsDB" id="25897"/>
<dbReference type="ProteomicsDB" id="56508">
    <molecule id="P52736-1"/>
</dbReference>
<dbReference type="ProteomicsDB" id="56509">
    <molecule id="P52736-2"/>
</dbReference>
<dbReference type="Antibodypedia" id="814">
    <property type="antibodies" value="181 antibodies from 20 providers"/>
</dbReference>
<dbReference type="DNASU" id="7692"/>
<dbReference type="Ensembl" id="ENST00000316358.8">
    <molecule id="P52736-1"/>
    <property type="protein sequence ID" value="ENSP00000346090.3"/>
    <property type="gene ID" value="ENSG00000125846.17"/>
</dbReference>
<dbReference type="Ensembl" id="ENST00000377671.7">
    <molecule id="P52736-2"/>
    <property type="protein sequence ID" value="ENSP00000366899.3"/>
    <property type="gene ID" value="ENSG00000125846.17"/>
</dbReference>
<dbReference type="Ensembl" id="ENST00000396026.7">
    <molecule id="P52736-2"/>
    <property type="protein sequence ID" value="ENSP00000400897.3"/>
    <property type="gene ID" value="ENSG00000125846.17"/>
</dbReference>
<dbReference type="Ensembl" id="ENST00000401790.6">
    <molecule id="P52736-1"/>
    <property type="protein sequence ID" value="ENSP00000383945.1"/>
    <property type="gene ID" value="ENSG00000125846.17"/>
</dbReference>
<dbReference type="Ensembl" id="ENST00000425686.3">
    <molecule id="P52736-1"/>
    <property type="protein sequence ID" value="ENSP00000406638.2"/>
    <property type="gene ID" value="ENSG00000125846.17"/>
</dbReference>
<dbReference type="Ensembl" id="ENST00000535822.6">
    <molecule id="P52736-3"/>
    <property type="protein sequence ID" value="ENSP00000439427.3"/>
    <property type="gene ID" value="ENSG00000125846.17"/>
</dbReference>
<dbReference type="Ensembl" id="ENST00000622607.4">
    <molecule id="P52736-1"/>
    <property type="protein sequence ID" value="ENSP00000481326.1"/>
    <property type="gene ID" value="ENSG00000125846.17"/>
</dbReference>
<dbReference type="Ensembl" id="ENST00000628216.2">
    <molecule id="P52736-5"/>
    <property type="protein sequence ID" value="ENSP00000487315.1"/>
    <property type="gene ID" value="ENSG00000125846.17"/>
</dbReference>
<dbReference type="Ensembl" id="ENST00000630056.1">
    <molecule id="P52736-3"/>
    <property type="protein sequence ID" value="ENSP00000485741.1"/>
    <property type="gene ID" value="ENSG00000125846.17"/>
</dbReference>
<dbReference type="Ensembl" id="ENST00000698698.1">
    <molecule id="P52736-1"/>
    <property type="protein sequence ID" value="ENSP00000513879.1"/>
    <property type="gene ID" value="ENSG00000125846.17"/>
</dbReference>
<dbReference type="Ensembl" id="ENST00000698699.1">
    <molecule id="P52736-1"/>
    <property type="protein sequence ID" value="ENSP00000513880.1"/>
    <property type="gene ID" value="ENSG00000125846.17"/>
</dbReference>
<dbReference type="Ensembl" id="ENST00000698704.1">
    <molecule id="P52736-1"/>
    <property type="protein sequence ID" value="ENSP00000513883.1"/>
    <property type="gene ID" value="ENSG00000125846.17"/>
</dbReference>
<dbReference type="Ensembl" id="ENST00000698705.1">
    <molecule id="P52736-1"/>
    <property type="protein sequence ID" value="ENSP00000513884.1"/>
    <property type="gene ID" value="ENSG00000125846.17"/>
</dbReference>
<dbReference type="GeneID" id="7692"/>
<dbReference type="KEGG" id="hsa:7692"/>
<dbReference type="MANE-Select" id="ENST00000425686.3">
    <property type="protein sequence ID" value="ENSP00000406638.2"/>
    <property type="RefSeq nucleotide sequence ID" value="NM_001352452.2"/>
    <property type="RefSeq protein sequence ID" value="NP_001339381.2"/>
</dbReference>
<dbReference type="UCSC" id="uc002wql.6">
    <molecule id="P52736-1"/>
    <property type="organism name" value="human"/>
</dbReference>
<dbReference type="AGR" id="HGNC:12917"/>
<dbReference type="CTD" id="7692"/>
<dbReference type="DisGeNET" id="7692"/>
<dbReference type="GeneCards" id="ZNF133"/>
<dbReference type="HGNC" id="HGNC:12917">
    <property type="gene designation" value="ZNF133"/>
</dbReference>
<dbReference type="HPA" id="ENSG00000125846">
    <property type="expression patterns" value="Low tissue specificity"/>
</dbReference>
<dbReference type="MIM" id="604075">
    <property type="type" value="gene"/>
</dbReference>
<dbReference type="neXtProt" id="NX_P52736"/>
<dbReference type="OpenTargets" id="ENSG00000125846"/>
<dbReference type="PharmGKB" id="PA134900961"/>
<dbReference type="VEuPathDB" id="HostDB:ENSG00000125846"/>
<dbReference type="eggNOG" id="KOG1721">
    <property type="taxonomic scope" value="Eukaryota"/>
</dbReference>
<dbReference type="GeneTree" id="ENSGT00940000162260"/>
<dbReference type="HOGENOM" id="CLU_002678_44_5_1"/>
<dbReference type="InParanoid" id="P52736"/>
<dbReference type="OMA" id="QKFHMQH"/>
<dbReference type="OrthoDB" id="654211at2759"/>
<dbReference type="PAN-GO" id="P52736">
    <property type="GO annotations" value="3 GO annotations based on evolutionary models"/>
</dbReference>
<dbReference type="PhylomeDB" id="P52736"/>
<dbReference type="TreeFam" id="TF338096"/>
<dbReference type="PathwayCommons" id="P52736"/>
<dbReference type="Reactome" id="R-HSA-212436">
    <property type="pathway name" value="Generic Transcription Pathway"/>
</dbReference>
<dbReference type="SignaLink" id="P52736"/>
<dbReference type="BioGRID-ORCS" id="7692">
    <property type="hits" value="67 hits in 1186 CRISPR screens"/>
</dbReference>
<dbReference type="ChiTaRS" id="ZNF133">
    <property type="organism name" value="human"/>
</dbReference>
<dbReference type="GeneWiki" id="ZNF133"/>
<dbReference type="GenomeRNAi" id="7692"/>
<dbReference type="Pharos" id="P52736">
    <property type="development level" value="Tbio"/>
</dbReference>
<dbReference type="PRO" id="PR:P52736"/>
<dbReference type="Proteomes" id="UP000005640">
    <property type="component" value="Chromosome 20"/>
</dbReference>
<dbReference type="RNAct" id="P52736">
    <property type="molecule type" value="protein"/>
</dbReference>
<dbReference type="Bgee" id="ENSG00000125846">
    <property type="expression patterns" value="Expressed in cerebellar hemisphere and 186 other cell types or tissues"/>
</dbReference>
<dbReference type="ExpressionAtlas" id="P52736">
    <property type="expression patterns" value="baseline and differential"/>
</dbReference>
<dbReference type="GO" id="GO:0005634">
    <property type="term" value="C:nucleus"/>
    <property type="evidence" value="ECO:0000318"/>
    <property type="project" value="GO_Central"/>
</dbReference>
<dbReference type="GO" id="GO:0003700">
    <property type="term" value="F:DNA-binding transcription factor activity"/>
    <property type="evidence" value="ECO:0000304"/>
    <property type="project" value="ProtInc"/>
</dbReference>
<dbReference type="GO" id="GO:0000981">
    <property type="term" value="F:DNA-binding transcription factor activity, RNA polymerase II-specific"/>
    <property type="evidence" value="ECO:0000318"/>
    <property type="project" value="GO_Central"/>
</dbReference>
<dbReference type="GO" id="GO:0000977">
    <property type="term" value="F:RNA polymerase II transcription regulatory region sequence-specific DNA binding"/>
    <property type="evidence" value="ECO:0000318"/>
    <property type="project" value="GO_Central"/>
</dbReference>
<dbReference type="GO" id="GO:0008270">
    <property type="term" value="F:zinc ion binding"/>
    <property type="evidence" value="ECO:0007669"/>
    <property type="project" value="UniProtKB-KW"/>
</dbReference>
<dbReference type="GO" id="GO:0000122">
    <property type="term" value="P:negative regulation of transcription by RNA polymerase II"/>
    <property type="evidence" value="ECO:0000314"/>
    <property type="project" value="ARUK-UCL"/>
</dbReference>
<dbReference type="GO" id="GO:0006357">
    <property type="term" value="P:regulation of transcription by RNA polymerase II"/>
    <property type="evidence" value="ECO:0000318"/>
    <property type="project" value="GO_Central"/>
</dbReference>
<dbReference type="CDD" id="cd07765">
    <property type="entry name" value="KRAB_A-box"/>
    <property type="match status" value="1"/>
</dbReference>
<dbReference type="FunFam" id="3.30.160.60:FF:000478">
    <property type="entry name" value="Zinc finger protein 133"/>
    <property type="match status" value="3"/>
</dbReference>
<dbReference type="FunFam" id="3.30.160.60:FF:001664">
    <property type="entry name" value="Zinc finger protein 133"/>
    <property type="match status" value="1"/>
</dbReference>
<dbReference type="FunFam" id="3.30.160.60:FF:000155">
    <property type="entry name" value="zinc finger protein 133 isoform X1"/>
    <property type="match status" value="2"/>
</dbReference>
<dbReference type="FunFam" id="3.30.160.60:FF:000189">
    <property type="entry name" value="zinc finger protein 133 isoform X1"/>
    <property type="match status" value="3"/>
</dbReference>
<dbReference type="FunFam" id="3.30.160.60:FF:000740">
    <property type="entry name" value="zinc finger protein 133 isoform X1"/>
    <property type="match status" value="1"/>
</dbReference>
<dbReference type="FunFam" id="3.30.160.60:FF:001070">
    <property type="entry name" value="zinc finger protein 133 isoform X1"/>
    <property type="match status" value="1"/>
</dbReference>
<dbReference type="FunFam" id="3.30.160.60:FF:001353">
    <property type="entry name" value="zinc finger protein 133 isoform X1"/>
    <property type="match status" value="1"/>
</dbReference>
<dbReference type="FunFam" id="3.30.160.60:FF:001393">
    <property type="entry name" value="zinc finger protein 133 isoform X1"/>
    <property type="match status" value="1"/>
</dbReference>
<dbReference type="FunFam" id="3.30.160.60:FF:000566">
    <property type="entry name" value="zinc finger protein 133 isoform X2"/>
    <property type="match status" value="1"/>
</dbReference>
<dbReference type="FunFam" id="3.30.160.60:FF:001619">
    <property type="entry name" value="zinc finger protein 133 isoform X2"/>
    <property type="match status" value="1"/>
</dbReference>
<dbReference type="Gene3D" id="6.10.140.140">
    <property type="match status" value="1"/>
</dbReference>
<dbReference type="Gene3D" id="3.30.160.60">
    <property type="entry name" value="Classic Zinc Finger"/>
    <property type="match status" value="15"/>
</dbReference>
<dbReference type="InterPro" id="IPR001909">
    <property type="entry name" value="KRAB"/>
</dbReference>
<dbReference type="InterPro" id="IPR036051">
    <property type="entry name" value="KRAB_dom_sf"/>
</dbReference>
<dbReference type="InterPro" id="IPR036236">
    <property type="entry name" value="Znf_C2H2_sf"/>
</dbReference>
<dbReference type="InterPro" id="IPR013087">
    <property type="entry name" value="Znf_C2H2_type"/>
</dbReference>
<dbReference type="PANTHER" id="PTHR24376:SF251">
    <property type="entry name" value="TRANSCRIPTIONAL REPRESSOR CTCF"/>
    <property type="match status" value="1"/>
</dbReference>
<dbReference type="PANTHER" id="PTHR24376">
    <property type="entry name" value="ZINC FINGER PROTEIN"/>
    <property type="match status" value="1"/>
</dbReference>
<dbReference type="Pfam" id="PF01352">
    <property type="entry name" value="KRAB"/>
    <property type="match status" value="1"/>
</dbReference>
<dbReference type="Pfam" id="PF00096">
    <property type="entry name" value="zf-C2H2"/>
    <property type="match status" value="14"/>
</dbReference>
<dbReference type="SMART" id="SM00349">
    <property type="entry name" value="KRAB"/>
    <property type="match status" value="1"/>
</dbReference>
<dbReference type="SMART" id="SM00355">
    <property type="entry name" value="ZnF_C2H2"/>
    <property type="match status" value="15"/>
</dbReference>
<dbReference type="SUPFAM" id="SSF57667">
    <property type="entry name" value="beta-beta-alpha zinc fingers"/>
    <property type="match status" value="8"/>
</dbReference>
<dbReference type="SUPFAM" id="SSF109640">
    <property type="entry name" value="KRAB domain (Kruppel-associated box)"/>
    <property type="match status" value="1"/>
</dbReference>
<dbReference type="PROSITE" id="PS50805">
    <property type="entry name" value="KRAB"/>
    <property type="match status" value="1"/>
</dbReference>
<dbReference type="PROSITE" id="PS00028">
    <property type="entry name" value="ZINC_FINGER_C2H2_1"/>
    <property type="match status" value="14"/>
</dbReference>
<dbReference type="PROSITE" id="PS50157">
    <property type="entry name" value="ZINC_FINGER_C2H2_2"/>
    <property type="match status" value="15"/>
</dbReference>
<comment type="function">
    <text>May be involved in transcriptional regulation as a repressor.</text>
</comment>
<comment type="interaction">
    <interactant intactId="EBI-2687350">
        <id>P52736</id>
    </interactant>
    <interactant intactId="EBI-852851">
        <id>P01100</id>
        <label>FOS</label>
    </interactant>
    <organismsDiffer>false</organismsDiffer>
    <experiments>4</experiments>
</comment>
<comment type="interaction">
    <interactant intactId="EBI-2687350">
        <id>P52736</id>
    </interactant>
    <interactant intactId="EBI-10172290">
        <id>P60409</id>
        <label>KRTAP10-7</label>
    </interactant>
    <organismsDiffer>false</organismsDiffer>
    <experiments>3</experiments>
</comment>
<comment type="subcellular location">
    <subcellularLocation>
        <location evidence="13">Nucleus</location>
    </subcellularLocation>
</comment>
<comment type="alternative products">
    <event type="alternative splicing"/>
    <isoform>
        <id>P52736-1</id>
        <name>1</name>
        <sequence type="displayed"/>
    </isoform>
    <isoform>
        <id>P52736-2</id>
        <name>2</name>
        <sequence type="described" ref="VSP_039148"/>
    </isoform>
    <isoform>
        <id>P52736-3</id>
        <name>3</name>
        <sequence type="described" ref="VSP_055021"/>
    </isoform>
    <isoform>
        <id>P52736-4</id>
        <name>4</name>
        <sequence type="described" ref="VSP_055022"/>
    </isoform>
    <isoform>
        <id>P52736-5</id>
        <name>5</name>
        <sequence type="described" ref="VSP_055023"/>
    </isoform>
</comment>
<comment type="tissue specificity">
    <text>Seems ubiquitous. Seen in the heart, brain, placenta, lung, liver, skeletal muscle, kidney and pancreas.</text>
</comment>
<comment type="similarity">
    <text evidence="13">Belongs to the krueppel C2H2-type zinc-finger protein family.</text>
</comment>
<feature type="chain" id="PRO_0000047417" description="Zinc finger protein 133">
    <location>
        <begin position="1"/>
        <end position="654"/>
    </location>
</feature>
<feature type="domain" description="KRAB" evidence="2">
    <location>
        <begin position="1"/>
        <end position="72"/>
    </location>
</feature>
<feature type="zinc finger region" description="C2H2-type 1" evidence="1">
    <location>
        <begin position="214"/>
        <end position="236"/>
    </location>
</feature>
<feature type="zinc finger region" description="C2H2-type 2" evidence="1">
    <location>
        <begin position="242"/>
        <end position="264"/>
    </location>
</feature>
<feature type="zinc finger region" description="C2H2-type 3" evidence="1">
    <location>
        <begin position="270"/>
        <end position="292"/>
    </location>
</feature>
<feature type="zinc finger region" description="C2H2-type 4" evidence="1">
    <location>
        <begin position="298"/>
        <end position="320"/>
    </location>
</feature>
<feature type="zinc finger region" description="C2H2-type 5" evidence="1">
    <location>
        <begin position="326"/>
        <end position="348"/>
    </location>
</feature>
<feature type="zinc finger region" description="C2H2-type 6" evidence="1">
    <location>
        <begin position="354"/>
        <end position="376"/>
    </location>
</feature>
<feature type="zinc finger region" description="C2H2-type 7" evidence="1">
    <location>
        <begin position="382"/>
        <end position="404"/>
    </location>
</feature>
<feature type="zinc finger region" description="C2H2-type 8" evidence="1">
    <location>
        <begin position="410"/>
        <end position="432"/>
    </location>
</feature>
<feature type="zinc finger region" description="C2H2-type 9" evidence="1">
    <location>
        <begin position="438"/>
        <end position="460"/>
    </location>
</feature>
<feature type="zinc finger region" description="C2H2-type 10" evidence="1">
    <location>
        <begin position="466"/>
        <end position="488"/>
    </location>
</feature>
<feature type="zinc finger region" description="C2H2-type 11" evidence="1">
    <location>
        <begin position="494"/>
        <end position="516"/>
    </location>
</feature>
<feature type="zinc finger region" description="C2H2-type 12" evidence="1">
    <location>
        <begin position="522"/>
        <end position="544"/>
    </location>
</feature>
<feature type="zinc finger region" description="C2H2-type 13" evidence="1">
    <location>
        <begin position="550"/>
        <end position="572"/>
    </location>
</feature>
<feature type="zinc finger region" description="C2H2-type 14" evidence="1">
    <location>
        <begin position="578"/>
        <end position="600"/>
    </location>
</feature>
<feature type="zinc finger region" description="C2H2-type 15; atypical" evidence="1">
    <location>
        <begin position="606"/>
        <end position="631"/>
    </location>
</feature>
<feature type="region of interest" description="Disordered" evidence="3">
    <location>
        <begin position="119"/>
        <end position="198"/>
    </location>
</feature>
<feature type="region of interest" description="Disordered" evidence="3">
    <location>
        <begin position="622"/>
        <end position="654"/>
    </location>
</feature>
<feature type="compositionally biased region" description="Basic residues" evidence="3">
    <location>
        <begin position="622"/>
        <end position="634"/>
    </location>
</feature>
<feature type="cross-link" description="Glycyl lysine isopeptide (Lys-Gly) (interchain with G-Cter in SUMO2)" evidence="14">
    <location>
        <position position="310"/>
    </location>
</feature>
<feature type="cross-link" description="Glycyl lysine isopeptide (Lys-Gly) (interchain with G-Cter in SUMO2)" evidence="14">
    <location>
        <position position="338"/>
    </location>
</feature>
<feature type="cross-link" description="Glycyl lysine isopeptide (Lys-Gly) (interchain with G-Cter in SUMO2)" evidence="14">
    <location>
        <position position="506"/>
    </location>
</feature>
<feature type="cross-link" description="Glycyl lysine isopeptide (Lys-Gly) (interchain with G-Cter in SUMO2)" evidence="14">
    <location>
        <position position="576"/>
    </location>
</feature>
<feature type="cross-link" description="Glycyl lysine isopeptide (Lys-Gly) (interchain with G-Cter in SUMO2)" evidence="14">
    <location>
        <position position="604"/>
    </location>
</feature>
<feature type="cross-link" description="Glycyl lysine isopeptide (Lys-Gly) (interchain with G-Cter in SUMO2)" evidence="14">
    <location>
        <position position="618"/>
    </location>
</feature>
<feature type="splice variant" id="VSP_055021" description="In isoform 3." evidence="10">
    <location>
        <begin position="1"/>
        <end position="95"/>
    </location>
</feature>
<feature type="splice variant" id="VSP_055022" description="In isoform 4." evidence="10">
    <original>MAFRDVAVDFTQDEWRLLSPAQRTLYREVMLENYSNLVSLGISFSKPELITQLEQGKETWREEKKCSPATCP</original>
    <variation>MCNGRKTVL</variation>
    <location>
        <begin position="1"/>
        <end position="72"/>
    </location>
</feature>
<feature type="splice variant" id="VSP_055023" description="In isoform 5." evidence="10">
    <original>M</original>
    <variation>MAHM</variation>
    <location>
        <position position="1"/>
    </location>
</feature>
<feature type="splice variant" id="VSP_039148" description="In isoform 2." evidence="10 11 12">
    <location>
        <position position="73"/>
    </location>
</feature>
<feature type="sequence variant" id="VAR_028228" description="In dbSNP:rs1033545." evidence="4 5 6 7 8 9">
    <original>S</original>
    <variation>T</variation>
    <location>
        <position position="193"/>
    </location>
</feature>
<feature type="sequence variant" id="VAR_028229" description="In dbSNP:rs2228273.">
    <original>G</original>
    <variation>E</variation>
    <location>
        <position position="194"/>
    </location>
</feature>
<feature type="sequence conflict" description="In Ref. 4; BAG58259." evidence="13" ref="4">
    <original>N</original>
    <variation>S</variation>
    <location>
        <position position="228"/>
    </location>
</feature>
<feature type="sequence conflict" description="In Ref. 4; BAG58430." evidence="13" ref="4">
    <original>F</original>
    <variation>Y</variation>
    <location>
        <position position="363"/>
    </location>
</feature>
<evidence type="ECO:0000255" key="1">
    <source>
        <dbReference type="PROSITE-ProRule" id="PRU00042"/>
    </source>
</evidence>
<evidence type="ECO:0000255" key="2">
    <source>
        <dbReference type="PROSITE-ProRule" id="PRU00119"/>
    </source>
</evidence>
<evidence type="ECO:0000256" key="3">
    <source>
        <dbReference type="SAM" id="MobiDB-lite"/>
    </source>
</evidence>
<evidence type="ECO:0000269" key="4">
    <source>
    </source>
</evidence>
<evidence type="ECO:0000269" key="5">
    <source>
    </source>
</evidence>
<evidence type="ECO:0000269" key="6">
    <source>
    </source>
</evidence>
<evidence type="ECO:0000269" key="7">
    <source>
    </source>
</evidence>
<evidence type="ECO:0000269" key="8">
    <source ref="3"/>
</evidence>
<evidence type="ECO:0000269" key="9">
    <source ref="6"/>
</evidence>
<evidence type="ECO:0000303" key="10">
    <source>
    </source>
</evidence>
<evidence type="ECO:0000303" key="11">
    <source>
    </source>
</evidence>
<evidence type="ECO:0000303" key="12">
    <source ref="3"/>
</evidence>
<evidence type="ECO:0000305" key="13"/>
<evidence type="ECO:0007744" key="14">
    <source>
    </source>
</evidence>
<protein>
    <recommendedName>
        <fullName>Zinc finger protein 133</fullName>
    </recommendedName>
    <alternativeName>
        <fullName>Zinc finger protein 150</fullName>
    </alternativeName>
</protein>
<keyword id="KW-0025">Alternative splicing</keyword>
<keyword id="KW-0238">DNA-binding</keyword>
<keyword id="KW-1017">Isopeptide bond</keyword>
<keyword id="KW-0479">Metal-binding</keyword>
<keyword id="KW-0539">Nucleus</keyword>
<keyword id="KW-1267">Proteomics identification</keyword>
<keyword id="KW-1185">Reference proteome</keyword>
<keyword id="KW-0677">Repeat</keyword>
<keyword id="KW-0678">Repressor</keyword>
<keyword id="KW-0804">Transcription</keyword>
<keyword id="KW-0805">Transcription regulation</keyword>
<keyword id="KW-0832">Ubl conjugation</keyword>
<keyword id="KW-0862">Zinc</keyword>
<keyword id="KW-0863">Zinc-finger</keyword>
<sequence length="654" mass="73388">MAFRDVAVDFTQDEWRLLSPAQRTLYREVMLENYSNLVSLGISFSKPELITQLEQGKETWREEKKCSPATCPADPEPELYLDPFCPPGFSSQKFPMQHVLCNHPPWIFTCLCAEGNIQPGDPGPGDQEKQQQASEGRPWSDQAEGPEGEGAMPLFGRTKKRTLGAFSRPPQRQPVSSRNGLRGVELEASPAQSGNPEETDKLLKRIEVLGFGTVNCGECGLSFSKMTNLLSHQRIHSGEKPYVCGVCEKGFSLKKSLARHQKAHSGEKPIVCRECGRGFNRKSTLIIHERTHSGEKPYMCSECGRGFSQKSNLIIHQRTHSGEKPYVCRECGKGFSQKSAVVRHQRTHLEEKTIVCSDCGLGFSDRSNLISHQRTHSGEKPYACKECGRCFRQRTTLVNHQRTHSKEKPYVCGVCGHSFSQNSTLISHRRTHTGEKPYVCGVCGRGFSLKSHLNRHQNIHSGEKPIVCKDCGRGFSQQSNLIRHQRTHSGEKPMVCGECGRGFSQKSNLVAHQRTHSGERPYVCRECGRGFSHQAGLIRHKRKHSREKPYMCRQCGLGFGNKSALITHKRAHSEEKPCVCRECGQGFLQKSHLTLHQMTHTGEKPYVCKTCGRGFSLKSHLSRHRKTTSVHHRLPVQPDPEPCAGQPSDSLYSL</sequence>